<comment type="function">
    <text evidence="1">Hydrolyzes ribosome-free peptidyl-tRNAs (with 1 or more amino acids incorporated), which drop off the ribosome during protein synthesis, or as a result of ribosome stalling.</text>
</comment>
<comment type="function">
    <text evidence="1">Catalyzes the release of premature peptidyl moieties from peptidyl-tRNA molecules trapped in stalled 50S ribosomal subunits, and thus maintains levels of free tRNAs and 50S ribosomes.</text>
</comment>
<comment type="catalytic activity">
    <reaction evidence="1">
        <text>an N-acyl-L-alpha-aminoacyl-tRNA + H2O = an N-acyl-L-amino acid + a tRNA + H(+)</text>
        <dbReference type="Rhea" id="RHEA:54448"/>
        <dbReference type="Rhea" id="RHEA-COMP:10123"/>
        <dbReference type="Rhea" id="RHEA-COMP:13883"/>
        <dbReference type="ChEBI" id="CHEBI:15377"/>
        <dbReference type="ChEBI" id="CHEBI:15378"/>
        <dbReference type="ChEBI" id="CHEBI:59874"/>
        <dbReference type="ChEBI" id="CHEBI:78442"/>
        <dbReference type="ChEBI" id="CHEBI:138191"/>
        <dbReference type="EC" id="3.1.1.29"/>
    </reaction>
</comment>
<comment type="subunit">
    <text evidence="1">Monomer.</text>
</comment>
<comment type="subcellular location">
    <subcellularLocation>
        <location evidence="1">Cytoplasm</location>
    </subcellularLocation>
</comment>
<comment type="similarity">
    <text evidence="1">Belongs to the PTH family.</text>
</comment>
<comment type="sequence caution" evidence="2">
    <conflict type="erroneous initiation">
        <sequence resource="EMBL-CDS" id="ABF33070"/>
    </conflict>
    <text>Extended N-terminus.</text>
</comment>
<accession>Q1JJA3</accession>
<proteinExistence type="inferred from homology"/>
<name>PTH_STRPD</name>
<gene>
    <name evidence="1" type="primary">pth</name>
    <name type="ordered locus">MGAS10270_Spy0005</name>
</gene>
<keyword id="KW-0963">Cytoplasm</keyword>
<keyword id="KW-0378">Hydrolase</keyword>
<keyword id="KW-0694">RNA-binding</keyword>
<keyword id="KW-0820">tRNA-binding</keyword>
<evidence type="ECO:0000255" key="1">
    <source>
        <dbReference type="HAMAP-Rule" id="MF_00083"/>
    </source>
</evidence>
<evidence type="ECO:0000305" key="2"/>
<protein>
    <recommendedName>
        <fullName evidence="1">Peptidyl-tRNA hydrolase</fullName>
        <shortName evidence="1">Pth</shortName>
        <ecNumber evidence="1">3.1.1.29</ecNumber>
    </recommendedName>
</protein>
<sequence>MVKMIVGLGNPGSKYEKTKHNIGFMAIDNIVKNLDVTFTDDKNFKAQIGSTFINHEKVYFVKPTTFMNNSGIAVKALLTYYNIDITDLIVIYDDLDMEVSKLRLRSKGSAGGHNGIKSIIAHIGTQEFNRIKVGIGRPLKGMTVINHVMGQFNTEDNIAISLTLDRVVNAVKFYLQENDFEKTMQKFNG</sequence>
<reference key="1">
    <citation type="journal article" date="2006" name="Proc. Natl. Acad. Sci. U.S.A.">
        <title>Molecular genetic anatomy of inter- and intraserotype variation in the human bacterial pathogen group A Streptococcus.</title>
        <authorList>
            <person name="Beres S.B."/>
            <person name="Richter E.W."/>
            <person name="Nagiec M.J."/>
            <person name="Sumby P."/>
            <person name="Porcella S.F."/>
            <person name="DeLeo F.R."/>
            <person name="Musser J.M."/>
        </authorList>
    </citation>
    <scope>NUCLEOTIDE SEQUENCE [LARGE SCALE GENOMIC DNA]</scope>
    <source>
        <strain>MGAS10270</strain>
    </source>
</reference>
<organism>
    <name type="scientific">Streptococcus pyogenes serotype M2 (strain MGAS10270)</name>
    <dbReference type="NCBI Taxonomy" id="370552"/>
    <lineage>
        <taxon>Bacteria</taxon>
        <taxon>Bacillati</taxon>
        <taxon>Bacillota</taxon>
        <taxon>Bacilli</taxon>
        <taxon>Lactobacillales</taxon>
        <taxon>Streptococcaceae</taxon>
        <taxon>Streptococcus</taxon>
    </lineage>
</organism>
<dbReference type="EC" id="3.1.1.29" evidence="1"/>
<dbReference type="EMBL" id="CP000260">
    <property type="protein sequence ID" value="ABF33070.1"/>
    <property type="status" value="ALT_INIT"/>
    <property type="molecule type" value="Genomic_DNA"/>
</dbReference>
<dbReference type="RefSeq" id="WP_002981924.1">
    <property type="nucleotide sequence ID" value="NZ_CVUH01000001.1"/>
</dbReference>
<dbReference type="SMR" id="Q1JJA3"/>
<dbReference type="GeneID" id="69899957"/>
<dbReference type="KEGG" id="sph:MGAS10270_Spy0005"/>
<dbReference type="HOGENOM" id="CLU_062456_4_1_9"/>
<dbReference type="Proteomes" id="UP000002436">
    <property type="component" value="Chromosome"/>
</dbReference>
<dbReference type="GO" id="GO:0005737">
    <property type="term" value="C:cytoplasm"/>
    <property type="evidence" value="ECO:0007669"/>
    <property type="project" value="UniProtKB-SubCell"/>
</dbReference>
<dbReference type="GO" id="GO:0004045">
    <property type="term" value="F:peptidyl-tRNA hydrolase activity"/>
    <property type="evidence" value="ECO:0007669"/>
    <property type="project" value="UniProtKB-UniRule"/>
</dbReference>
<dbReference type="GO" id="GO:0000049">
    <property type="term" value="F:tRNA binding"/>
    <property type="evidence" value="ECO:0007669"/>
    <property type="project" value="UniProtKB-UniRule"/>
</dbReference>
<dbReference type="GO" id="GO:0006515">
    <property type="term" value="P:protein quality control for misfolded or incompletely synthesized proteins"/>
    <property type="evidence" value="ECO:0007669"/>
    <property type="project" value="UniProtKB-UniRule"/>
</dbReference>
<dbReference type="GO" id="GO:0072344">
    <property type="term" value="P:rescue of stalled ribosome"/>
    <property type="evidence" value="ECO:0007669"/>
    <property type="project" value="UniProtKB-UniRule"/>
</dbReference>
<dbReference type="CDD" id="cd00462">
    <property type="entry name" value="PTH"/>
    <property type="match status" value="1"/>
</dbReference>
<dbReference type="FunFam" id="3.40.50.1470:FF:000001">
    <property type="entry name" value="Peptidyl-tRNA hydrolase"/>
    <property type="match status" value="1"/>
</dbReference>
<dbReference type="Gene3D" id="3.40.50.1470">
    <property type="entry name" value="Peptidyl-tRNA hydrolase"/>
    <property type="match status" value="1"/>
</dbReference>
<dbReference type="HAMAP" id="MF_00083">
    <property type="entry name" value="Pept_tRNA_hydro_bact"/>
    <property type="match status" value="1"/>
</dbReference>
<dbReference type="InterPro" id="IPR001328">
    <property type="entry name" value="Pept_tRNA_hydro"/>
</dbReference>
<dbReference type="InterPro" id="IPR018171">
    <property type="entry name" value="Pept_tRNA_hydro_CS"/>
</dbReference>
<dbReference type="InterPro" id="IPR036416">
    <property type="entry name" value="Pept_tRNA_hydro_sf"/>
</dbReference>
<dbReference type="NCBIfam" id="TIGR00447">
    <property type="entry name" value="pth"/>
    <property type="match status" value="1"/>
</dbReference>
<dbReference type="PANTHER" id="PTHR17224">
    <property type="entry name" value="PEPTIDYL-TRNA HYDROLASE"/>
    <property type="match status" value="1"/>
</dbReference>
<dbReference type="PANTHER" id="PTHR17224:SF1">
    <property type="entry name" value="PEPTIDYL-TRNA HYDROLASE"/>
    <property type="match status" value="1"/>
</dbReference>
<dbReference type="Pfam" id="PF01195">
    <property type="entry name" value="Pept_tRNA_hydro"/>
    <property type="match status" value="1"/>
</dbReference>
<dbReference type="SUPFAM" id="SSF53178">
    <property type="entry name" value="Peptidyl-tRNA hydrolase-like"/>
    <property type="match status" value="1"/>
</dbReference>
<dbReference type="PROSITE" id="PS01195">
    <property type="entry name" value="PEPT_TRNA_HYDROL_1"/>
    <property type="match status" value="1"/>
</dbReference>
<dbReference type="PROSITE" id="PS01196">
    <property type="entry name" value="PEPT_TRNA_HYDROL_2"/>
    <property type="match status" value="1"/>
</dbReference>
<feature type="chain" id="PRO_0000264120" description="Peptidyl-tRNA hydrolase">
    <location>
        <begin position="1"/>
        <end position="189"/>
    </location>
</feature>
<feature type="active site" description="Proton acceptor" evidence="1">
    <location>
        <position position="20"/>
    </location>
</feature>
<feature type="binding site" evidence="1">
    <location>
        <position position="15"/>
    </location>
    <ligand>
        <name>tRNA</name>
        <dbReference type="ChEBI" id="CHEBI:17843"/>
    </ligand>
</feature>
<feature type="binding site" evidence="1">
    <location>
        <position position="66"/>
    </location>
    <ligand>
        <name>tRNA</name>
        <dbReference type="ChEBI" id="CHEBI:17843"/>
    </ligand>
</feature>
<feature type="binding site" evidence="1">
    <location>
        <position position="68"/>
    </location>
    <ligand>
        <name>tRNA</name>
        <dbReference type="ChEBI" id="CHEBI:17843"/>
    </ligand>
</feature>
<feature type="binding site" evidence="1">
    <location>
        <position position="114"/>
    </location>
    <ligand>
        <name>tRNA</name>
        <dbReference type="ChEBI" id="CHEBI:17843"/>
    </ligand>
</feature>
<feature type="site" description="Discriminates between blocked and unblocked aminoacyl-tRNA" evidence="1">
    <location>
        <position position="10"/>
    </location>
</feature>
<feature type="site" description="Stabilizes the basic form of H active site to accept a proton" evidence="1">
    <location>
        <position position="93"/>
    </location>
</feature>